<evidence type="ECO:0000255" key="1">
    <source>
        <dbReference type="HAMAP-Rule" id="MF_01563"/>
    </source>
</evidence>
<feature type="chain" id="PRO_1000087815" description="HTH-type transcriptional regulator UlaR">
    <location>
        <begin position="1"/>
        <end position="251"/>
    </location>
</feature>
<feature type="domain" description="HTH deoR-type" evidence="1">
    <location>
        <begin position="3"/>
        <end position="58"/>
    </location>
</feature>
<feature type="DNA-binding region" description="H-T-H motif" evidence="1">
    <location>
        <begin position="20"/>
        <end position="39"/>
    </location>
</feature>
<protein>
    <recommendedName>
        <fullName evidence="1">HTH-type transcriptional regulator UlaR</fullName>
    </recommendedName>
</protein>
<dbReference type="EMBL" id="CP000946">
    <property type="protein sequence ID" value="ACA79426.1"/>
    <property type="molecule type" value="Genomic_DNA"/>
</dbReference>
<dbReference type="RefSeq" id="WP_000133631.1">
    <property type="nucleotide sequence ID" value="NZ_MTFT01000012.1"/>
</dbReference>
<dbReference type="SMR" id="B1IT15"/>
<dbReference type="GeneID" id="75202425"/>
<dbReference type="KEGG" id="ecl:EcolC_3822"/>
<dbReference type="HOGENOM" id="CLU_060699_3_2_6"/>
<dbReference type="GO" id="GO:0005737">
    <property type="term" value="C:cytoplasm"/>
    <property type="evidence" value="ECO:0007669"/>
    <property type="project" value="UniProtKB-SubCell"/>
</dbReference>
<dbReference type="GO" id="GO:0003677">
    <property type="term" value="F:DNA binding"/>
    <property type="evidence" value="ECO:0007669"/>
    <property type="project" value="UniProtKB-KW"/>
</dbReference>
<dbReference type="GO" id="GO:0003700">
    <property type="term" value="F:DNA-binding transcription factor activity"/>
    <property type="evidence" value="ECO:0007669"/>
    <property type="project" value="InterPro"/>
</dbReference>
<dbReference type="GO" id="GO:0045892">
    <property type="term" value="P:negative regulation of DNA-templated transcription"/>
    <property type="evidence" value="ECO:0007669"/>
    <property type="project" value="UniProtKB-UniRule"/>
</dbReference>
<dbReference type="FunFam" id="1.10.10.10:FF:000160">
    <property type="entry name" value="HTH-type transcriptional regulator UlaR"/>
    <property type="match status" value="1"/>
</dbReference>
<dbReference type="Gene3D" id="1.10.10.10">
    <property type="entry name" value="Winged helix-like DNA-binding domain superfamily/Winged helix DNA-binding domain"/>
    <property type="match status" value="1"/>
</dbReference>
<dbReference type="HAMAP" id="MF_01563">
    <property type="entry name" value="HTH_type_UlaR"/>
    <property type="match status" value="1"/>
</dbReference>
<dbReference type="InterPro" id="IPR050313">
    <property type="entry name" value="Carb_Metab_HTH_regulators"/>
</dbReference>
<dbReference type="InterPro" id="IPR014036">
    <property type="entry name" value="DeoR-like_C"/>
</dbReference>
<dbReference type="InterPro" id="IPR001034">
    <property type="entry name" value="DeoR_HTH"/>
</dbReference>
<dbReference type="InterPro" id="IPR037171">
    <property type="entry name" value="NagB/RpiA_transferase-like"/>
</dbReference>
<dbReference type="InterPro" id="IPR018356">
    <property type="entry name" value="Tscrpt_reg_HTH_DeoR_CS"/>
</dbReference>
<dbReference type="InterPro" id="IPR023711">
    <property type="entry name" value="Tscrpt_reg_HTH_UlaR"/>
</dbReference>
<dbReference type="InterPro" id="IPR036388">
    <property type="entry name" value="WH-like_DNA-bd_sf"/>
</dbReference>
<dbReference type="InterPro" id="IPR036390">
    <property type="entry name" value="WH_DNA-bd_sf"/>
</dbReference>
<dbReference type="NCBIfam" id="NF010034">
    <property type="entry name" value="PRK13509.1"/>
    <property type="match status" value="1"/>
</dbReference>
<dbReference type="PANTHER" id="PTHR30363">
    <property type="entry name" value="HTH-TYPE TRANSCRIPTIONAL REGULATOR SRLR-RELATED"/>
    <property type="match status" value="1"/>
</dbReference>
<dbReference type="PANTHER" id="PTHR30363:SF55">
    <property type="entry name" value="HTH-TYPE TRANSCRIPTIONAL REGULATOR ULAR"/>
    <property type="match status" value="1"/>
</dbReference>
<dbReference type="Pfam" id="PF00455">
    <property type="entry name" value="DeoRC"/>
    <property type="match status" value="1"/>
</dbReference>
<dbReference type="Pfam" id="PF08220">
    <property type="entry name" value="HTH_DeoR"/>
    <property type="match status" value="1"/>
</dbReference>
<dbReference type="PRINTS" id="PR00037">
    <property type="entry name" value="HTHLACR"/>
</dbReference>
<dbReference type="SMART" id="SM01134">
    <property type="entry name" value="DeoRC"/>
    <property type="match status" value="1"/>
</dbReference>
<dbReference type="SMART" id="SM00420">
    <property type="entry name" value="HTH_DEOR"/>
    <property type="match status" value="1"/>
</dbReference>
<dbReference type="SUPFAM" id="SSF100950">
    <property type="entry name" value="NagB/RpiA/CoA transferase-like"/>
    <property type="match status" value="1"/>
</dbReference>
<dbReference type="SUPFAM" id="SSF46785">
    <property type="entry name" value="Winged helix' DNA-binding domain"/>
    <property type="match status" value="1"/>
</dbReference>
<dbReference type="PROSITE" id="PS00894">
    <property type="entry name" value="HTH_DEOR_1"/>
    <property type="match status" value="1"/>
</dbReference>
<dbReference type="PROSITE" id="PS51000">
    <property type="entry name" value="HTH_DEOR_2"/>
    <property type="match status" value="1"/>
</dbReference>
<gene>
    <name evidence="1" type="primary">ulaR</name>
    <name type="ordered locus">EcolC_3822</name>
</gene>
<sequence>MTEAQRHQILLEMLAQLGFVTVEKVVERLGISPATARRDINKLDESGKLKKVRNGAEAITQQRPRWTPMNLHQAQNHDEKVRIAKAASQLVNPGESVVINCGSTAFLLGREMCGKPVQIITNYLPLANYLIDQEHDSVIIMGGQYNKSQSITLSPQGSENSLYAGHWMFTSGKGLTAEGLYKTDMLTAMAEQKMLSVVGKLVVLVDSSKIGERAGMLFSRADQIDMLITGKNANPEILQQLEAQGVSILRV</sequence>
<keyword id="KW-0963">Cytoplasm</keyword>
<keyword id="KW-0238">DNA-binding</keyword>
<keyword id="KW-0678">Repressor</keyword>
<keyword id="KW-0804">Transcription</keyword>
<keyword id="KW-0805">Transcription regulation</keyword>
<organism>
    <name type="scientific">Escherichia coli (strain ATCC 8739 / DSM 1576 / NBRC 3972 / NCIMB 8545 / WDCM 00012 / Crooks)</name>
    <dbReference type="NCBI Taxonomy" id="481805"/>
    <lineage>
        <taxon>Bacteria</taxon>
        <taxon>Pseudomonadati</taxon>
        <taxon>Pseudomonadota</taxon>
        <taxon>Gammaproteobacteria</taxon>
        <taxon>Enterobacterales</taxon>
        <taxon>Enterobacteriaceae</taxon>
        <taxon>Escherichia</taxon>
    </lineage>
</organism>
<name>ULAR_ECOLC</name>
<proteinExistence type="inferred from homology"/>
<accession>B1IT15</accession>
<reference key="1">
    <citation type="submission" date="2008-02" db="EMBL/GenBank/DDBJ databases">
        <title>Complete sequence of Escherichia coli C str. ATCC 8739.</title>
        <authorList>
            <person name="Copeland A."/>
            <person name="Lucas S."/>
            <person name="Lapidus A."/>
            <person name="Glavina del Rio T."/>
            <person name="Dalin E."/>
            <person name="Tice H."/>
            <person name="Bruce D."/>
            <person name="Goodwin L."/>
            <person name="Pitluck S."/>
            <person name="Kiss H."/>
            <person name="Brettin T."/>
            <person name="Detter J.C."/>
            <person name="Han C."/>
            <person name="Kuske C.R."/>
            <person name="Schmutz J."/>
            <person name="Larimer F."/>
            <person name="Land M."/>
            <person name="Hauser L."/>
            <person name="Kyrpides N."/>
            <person name="Mikhailova N."/>
            <person name="Ingram L."/>
            <person name="Richardson P."/>
        </authorList>
    </citation>
    <scope>NUCLEOTIDE SEQUENCE [LARGE SCALE GENOMIC DNA]</scope>
    <source>
        <strain>ATCC 8739 / DSM 1576 / NBRC 3972 / NCIMB 8545 / WDCM 00012 / Crooks</strain>
    </source>
</reference>
<comment type="function">
    <text evidence="1">Represses ulaG and the ulaABCDEF operon.</text>
</comment>
<comment type="subcellular location">
    <subcellularLocation>
        <location evidence="1">Cytoplasm</location>
    </subcellularLocation>
</comment>